<keyword id="KW-0217">Developmental protein</keyword>
<keyword id="KW-0238">DNA-binding</keyword>
<keyword id="KW-0371">Homeobox</keyword>
<keyword id="KW-0539">Nucleus</keyword>
<keyword id="KW-1185">Reference proteome</keyword>
<keyword id="KW-0804">Transcription</keyword>
<keyword id="KW-0805">Transcription regulation</keyword>
<comment type="function">
    <text evidence="1">Transcription factor which may be involved in developmental processes.</text>
</comment>
<comment type="subcellular location">
    <subcellularLocation>
        <location evidence="2">Nucleus</location>
    </subcellularLocation>
</comment>
<comment type="similarity">
    <text evidence="4">Belongs to the WUS homeobox family.</text>
</comment>
<proteinExistence type="evidence at transcript level"/>
<gene>
    <name type="primary">WOX10</name>
    <name type="ordered locus">Os08g0242400</name>
    <name type="ordered locus">LOC_Os08g14400</name>
    <name type="ORF">OsJ_025487</name>
    <name type="ORF">OSJNBa0087F21.36</name>
</gene>
<accession>Q6Z3L4</accession>
<accession>A0A0P0XDH1</accession>
<accession>A0AAT5</accession>
<protein>
    <recommendedName>
        <fullName>WUSCHEL-related homeobox 10</fullName>
    </recommendedName>
    <alternativeName>
        <fullName>OsWOX10</fullName>
    </alternativeName>
    <alternativeName>
        <fullName>Protein WOX11/12</fullName>
    </alternativeName>
</protein>
<sequence length="284" mass="30272">MDRTATASWEVMSRRGEQQQQLMMQAPASHNGGSGGGEPARSRWAPKPEQILILESIFNSGMVNPAKDETARIRRLLERFGAVRDANVFYWFQNRRSRSRRRARQLQQACGAALHQLPSAAAAAGAGGGGDYYHHHHQPSSSPFLMHGGGGGGVVTSTTAAPAVAASGHFLADEVDGGGDDDLFAISRQMGLMARHGGGDHHYSSYADSDATQLSYQPTGTIQVFINGVAYDVPSGGALDMAGTFGRDAMLVHSSGEVLPVDEHGVLINSLQMGECYYLVSKSI</sequence>
<reference key="1">
    <citation type="journal article" date="2005" name="Nature">
        <title>The map-based sequence of the rice genome.</title>
        <authorList>
            <consortium name="International rice genome sequencing project (IRGSP)"/>
        </authorList>
    </citation>
    <scope>NUCLEOTIDE SEQUENCE [LARGE SCALE GENOMIC DNA]</scope>
    <source>
        <strain>cv. Nipponbare</strain>
    </source>
</reference>
<reference key="2">
    <citation type="journal article" date="2008" name="Nucleic Acids Res.">
        <title>The rice annotation project database (RAP-DB): 2008 update.</title>
        <authorList>
            <consortium name="The rice annotation project (RAP)"/>
        </authorList>
    </citation>
    <scope>GENOME REANNOTATION</scope>
    <source>
        <strain>cv. Nipponbare</strain>
    </source>
</reference>
<reference key="3">
    <citation type="journal article" date="2013" name="Rice">
        <title>Improvement of the Oryza sativa Nipponbare reference genome using next generation sequence and optical map data.</title>
        <authorList>
            <person name="Kawahara Y."/>
            <person name="de la Bastide M."/>
            <person name="Hamilton J.P."/>
            <person name="Kanamori H."/>
            <person name="McCombie W.R."/>
            <person name="Ouyang S."/>
            <person name="Schwartz D.C."/>
            <person name="Tanaka T."/>
            <person name="Wu J."/>
            <person name="Zhou S."/>
            <person name="Childs K.L."/>
            <person name="Davidson R.M."/>
            <person name="Lin H."/>
            <person name="Quesada-Ocampo L."/>
            <person name="Vaillancourt B."/>
            <person name="Sakai H."/>
            <person name="Lee S.S."/>
            <person name="Kim J."/>
            <person name="Numa H."/>
            <person name="Itoh T."/>
            <person name="Buell C.R."/>
            <person name="Matsumoto T."/>
        </authorList>
    </citation>
    <scope>GENOME REANNOTATION</scope>
    <source>
        <strain>cv. Nipponbare</strain>
    </source>
</reference>
<reference key="4">
    <citation type="journal article" date="2005" name="PLoS Biol.">
        <title>The genomes of Oryza sativa: a history of duplications.</title>
        <authorList>
            <person name="Yu J."/>
            <person name="Wang J."/>
            <person name="Lin W."/>
            <person name="Li S."/>
            <person name="Li H."/>
            <person name="Zhou J."/>
            <person name="Ni P."/>
            <person name="Dong W."/>
            <person name="Hu S."/>
            <person name="Zeng C."/>
            <person name="Zhang J."/>
            <person name="Zhang Y."/>
            <person name="Li R."/>
            <person name="Xu Z."/>
            <person name="Li S."/>
            <person name="Li X."/>
            <person name="Zheng H."/>
            <person name="Cong L."/>
            <person name="Lin L."/>
            <person name="Yin J."/>
            <person name="Geng J."/>
            <person name="Li G."/>
            <person name="Shi J."/>
            <person name="Liu J."/>
            <person name="Lv H."/>
            <person name="Li J."/>
            <person name="Wang J."/>
            <person name="Deng Y."/>
            <person name="Ran L."/>
            <person name="Shi X."/>
            <person name="Wang X."/>
            <person name="Wu Q."/>
            <person name="Li C."/>
            <person name="Ren X."/>
            <person name="Wang J."/>
            <person name="Wang X."/>
            <person name="Li D."/>
            <person name="Liu D."/>
            <person name="Zhang X."/>
            <person name="Ji Z."/>
            <person name="Zhao W."/>
            <person name="Sun Y."/>
            <person name="Zhang Z."/>
            <person name="Bao J."/>
            <person name="Han Y."/>
            <person name="Dong L."/>
            <person name="Ji J."/>
            <person name="Chen P."/>
            <person name="Wu S."/>
            <person name="Liu J."/>
            <person name="Xiao Y."/>
            <person name="Bu D."/>
            <person name="Tan J."/>
            <person name="Yang L."/>
            <person name="Ye C."/>
            <person name="Zhang J."/>
            <person name="Xu J."/>
            <person name="Zhou Y."/>
            <person name="Yu Y."/>
            <person name="Zhang B."/>
            <person name="Zhuang S."/>
            <person name="Wei H."/>
            <person name="Liu B."/>
            <person name="Lei M."/>
            <person name="Yu H."/>
            <person name="Li Y."/>
            <person name="Xu H."/>
            <person name="Wei S."/>
            <person name="He X."/>
            <person name="Fang L."/>
            <person name="Zhang Z."/>
            <person name="Zhang Y."/>
            <person name="Huang X."/>
            <person name="Su Z."/>
            <person name="Tong W."/>
            <person name="Li J."/>
            <person name="Tong Z."/>
            <person name="Li S."/>
            <person name="Ye J."/>
            <person name="Wang L."/>
            <person name="Fang L."/>
            <person name="Lei T."/>
            <person name="Chen C.-S."/>
            <person name="Chen H.-C."/>
            <person name="Xu Z."/>
            <person name="Li H."/>
            <person name="Huang H."/>
            <person name="Zhang F."/>
            <person name="Xu H."/>
            <person name="Li N."/>
            <person name="Zhao C."/>
            <person name="Li S."/>
            <person name="Dong L."/>
            <person name="Huang Y."/>
            <person name="Li L."/>
            <person name="Xi Y."/>
            <person name="Qi Q."/>
            <person name="Li W."/>
            <person name="Zhang B."/>
            <person name="Hu W."/>
            <person name="Zhang Y."/>
            <person name="Tian X."/>
            <person name="Jiao Y."/>
            <person name="Liang X."/>
            <person name="Jin J."/>
            <person name="Gao L."/>
            <person name="Zheng W."/>
            <person name="Hao B."/>
            <person name="Liu S.-M."/>
            <person name="Wang W."/>
            <person name="Yuan L."/>
            <person name="Cao M."/>
            <person name="McDermott J."/>
            <person name="Samudrala R."/>
            <person name="Wang J."/>
            <person name="Wong G.K.-S."/>
            <person name="Yang H."/>
        </authorList>
    </citation>
    <scope>NUCLEOTIDE SEQUENCE [LARGE SCALE GENOMIC DNA]</scope>
    <source>
        <strain>cv. Nipponbare</strain>
    </source>
</reference>
<reference key="5">
    <citation type="journal article" date="2003" name="Science">
        <title>Collection, mapping, and annotation of over 28,000 cDNA clones from japonica rice.</title>
        <authorList>
            <consortium name="The rice full-length cDNA consortium"/>
        </authorList>
    </citation>
    <scope>NUCLEOTIDE SEQUENCE [LARGE SCALE MRNA]</scope>
    <source>
        <strain>cv. Nipponbare</strain>
    </source>
</reference>
<reference key="6">
    <citation type="journal article" date="2006" name="Mol. Biol. Evol.">
        <title>The shoot stem cell niche in angiosperms: expression patterns of WUS orthologues in rice and maize imply major modifications in the course of mono- and dicot evolution.</title>
        <authorList>
            <person name="Nardmann J."/>
            <person name="Werr W."/>
        </authorList>
    </citation>
    <scope>NUCLEOTIDE SEQUENCE [MRNA] OF 39-103</scope>
</reference>
<reference key="7">
    <citation type="journal article" date="2007" name="Plant Physiol.">
        <title>A WUSCHEL-LIKE HOMEOBOX gene represses a YABBY gene expression required for rice leaf development.</title>
        <authorList>
            <person name="Dai M."/>
            <person name="Hu Y."/>
            <person name="Zhao Y."/>
            <person name="Liu H."/>
            <person name="Zhou D.-X."/>
        </authorList>
    </citation>
    <scope>NOMENCLATURE</scope>
</reference>
<dbReference type="EMBL" id="AP005249">
    <property type="protein sequence ID" value="BAD05582.1"/>
    <property type="molecule type" value="Genomic_DNA"/>
</dbReference>
<dbReference type="EMBL" id="AP008214">
    <property type="protein sequence ID" value="BAF23255.1"/>
    <property type="molecule type" value="Genomic_DNA"/>
</dbReference>
<dbReference type="EMBL" id="AP014964">
    <property type="protein sequence ID" value="BAT04504.1"/>
    <property type="molecule type" value="Genomic_DNA"/>
</dbReference>
<dbReference type="EMBL" id="CM000145">
    <property type="protein sequence ID" value="EAZ42004.1"/>
    <property type="molecule type" value="Genomic_DNA"/>
</dbReference>
<dbReference type="EMBL" id="AK107305">
    <property type="status" value="NOT_ANNOTATED_CDS"/>
    <property type="molecule type" value="mRNA"/>
</dbReference>
<dbReference type="EMBL" id="AM234754">
    <property type="protein sequence ID" value="CAJ84146.1"/>
    <property type="molecule type" value="mRNA"/>
</dbReference>
<dbReference type="RefSeq" id="XP_015649642.1">
    <property type="nucleotide sequence ID" value="XM_015794156.1"/>
</dbReference>
<dbReference type="SMR" id="Q6Z3L4"/>
<dbReference type="FunCoup" id="Q6Z3L4">
    <property type="interactions" value="44"/>
</dbReference>
<dbReference type="STRING" id="39947.Q6Z3L4"/>
<dbReference type="PaxDb" id="39947-Q6Z3L4"/>
<dbReference type="EnsemblPlants" id="Os08t0242400-01">
    <property type="protein sequence ID" value="Os08t0242400-01"/>
    <property type="gene ID" value="Os08g0242400"/>
</dbReference>
<dbReference type="Gramene" id="Os08t0242400-01">
    <property type="protein sequence ID" value="Os08t0242400-01"/>
    <property type="gene ID" value="Os08g0242400"/>
</dbReference>
<dbReference type="KEGG" id="dosa:Os08g0242400"/>
<dbReference type="eggNOG" id="ENOG502QUIQ">
    <property type="taxonomic scope" value="Eukaryota"/>
</dbReference>
<dbReference type="HOGENOM" id="CLU_030463_0_0_1"/>
<dbReference type="InParanoid" id="Q6Z3L4"/>
<dbReference type="OMA" id="CGYMAND"/>
<dbReference type="OrthoDB" id="670226at2759"/>
<dbReference type="Proteomes" id="UP000000763">
    <property type="component" value="Chromosome 8"/>
</dbReference>
<dbReference type="Proteomes" id="UP000007752">
    <property type="component" value="Chromosome 8"/>
</dbReference>
<dbReference type="Proteomes" id="UP000059680">
    <property type="component" value="Chromosome 8"/>
</dbReference>
<dbReference type="GO" id="GO:0005634">
    <property type="term" value="C:nucleus"/>
    <property type="evidence" value="ECO:0007669"/>
    <property type="project" value="UniProtKB-SubCell"/>
</dbReference>
<dbReference type="GO" id="GO:0003677">
    <property type="term" value="F:DNA binding"/>
    <property type="evidence" value="ECO:0007669"/>
    <property type="project" value="UniProtKB-KW"/>
</dbReference>
<dbReference type="GO" id="GO:0003700">
    <property type="term" value="F:DNA-binding transcription factor activity"/>
    <property type="evidence" value="ECO:0007669"/>
    <property type="project" value="InterPro"/>
</dbReference>
<dbReference type="GO" id="GO:0048830">
    <property type="term" value="P:adventitious root development"/>
    <property type="evidence" value="ECO:0007669"/>
    <property type="project" value="InterPro"/>
</dbReference>
<dbReference type="FunFam" id="1.10.10.60:FF:000118">
    <property type="entry name" value="WUSCHEL-related homeobox 11"/>
    <property type="match status" value="1"/>
</dbReference>
<dbReference type="Gene3D" id="1.10.10.60">
    <property type="entry name" value="Homeodomain-like"/>
    <property type="match status" value="1"/>
</dbReference>
<dbReference type="InterPro" id="IPR001356">
    <property type="entry name" value="HD"/>
</dbReference>
<dbReference type="InterPro" id="IPR009057">
    <property type="entry name" value="Homeodomain-like_sf"/>
</dbReference>
<dbReference type="InterPro" id="IPR044558">
    <property type="entry name" value="WOX11-like"/>
</dbReference>
<dbReference type="PANTHER" id="PTHR46998:SF1">
    <property type="entry name" value="WUSCHEL-RELATED HOMEOBOX 10"/>
    <property type="match status" value="1"/>
</dbReference>
<dbReference type="PANTHER" id="PTHR46998">
    <property type="entry name" value="WUSCHEL-RELATED HOMEOBOX 11"/>
    <property type="match status" value="1"/>
</dbReference>
<dbReference type="Pfam" id="PF00046">
    <property type="entry name" value="Homeodomain"/>
    <property type="match status" value="1"/>
</dbReference>
<dbReference type="SMART" id="SM00389">
    <property type="entry name" value="HOX"/>
    <property type="match status" value="1"/>
</dbReference>
<dbReference type="SUPFAM" id="SSF46689">
    <property type="entry name" value="Homeodomain-like"/>
    <property type="match status" value="1"/>
</dbReference>
<dbReference type="PROSITE" id="PS50071">
    <property type="entry name" value="HOMEOBOX_2"/>
    <property type="match status" value="1"/>
</dbReference>
<evidence type="ECO:0000250" key="1"/>
<evidence type="ECO:0000255" key="2">
    <source>
        <dbReference type="PROSITE-ProRule" id="PRU00108"/>
    </source>
</evidence>
<evidence type="ECO:0000256" key="3">
    <source>
        <dbReference type="SAM" id="MobiDB-lite"/>
    </source>
</evidence>
<evidence type="ECO:0000305" key="4"/>
<name>WOX10_ORYSJ</name>
<organism>
    <name type="scientific">Oryza sativa subsp. japonica</name>
    <name type="common">Rice</name>
    <dbReference type="NCBI Taxonomy" id="39947"/>
    <lineage>
        <taxon>Eukaryota</taxon>
        <taxon>Viridiplantae</taxon>
        <taxon>Streptophyta</taxon>
        <taxon>Embryophyta</taxon>
        <taxon>Tracheophyta</taxon>
        <taxon>Spermatophyta</taxon>
        <taxon>Magnoliopsida</taxon>
        <taxon>Liliopsida</taxon>
        <taxon>Poales</taxon>
        <taxon>Poaceae</taxon>
        <taxon>BOP clade</taxon>
        <taxon>Oryzoideae</taxon>
        <taxon>Oryzeae</taxon>
        <taxon>Oryzinae</taxon>
        <taxon>Oryza</taxon>
        <taxon>Oryza sativa</taxon>
    </lineage>
</organism>
<feature type="chain" id="PRO_0000308647" description="WUSCHEL-related homeobox 10">
    <location>
        <begin position="1"/>
        <end position="284"/>
    </location>
</feature>
<feature type="DNA-binding region" description="Homeobox; WUS-type" evidence="2">
    <location>
        <begin position="39"/>
        <end position="103"/>
    </location>
</feature>
<feature type="region of interest" description="Disordered" evidence="3">
    <location>
        <begin position="1"/>
        <end position="43"/>
    </location>
</feature>
<feature type="sequence conflict" description="In Ref. 5; AK107305 and 6; CAJ84146." evidence="4" ref="5 6">
    <original>N</original>
    <variation>S</variation>
    <location>
        <position position="64"/>
    </location>
</feature>